<name>OR5L2_HUMAN</name>
<feature type="chain" id="PRO_0000150603" description="Olfactory receptor 5L2">
    <location>
        <begin position="1"/>
        <end position="311"/>
    </location>
</feature>
<feature type="topological domain" description="Extracellular" evidence="1">
    <location>
        <begin position="1"/>
        <end position="25"/>
    </location>
</feature>
<feature type="transmembrane region" description="Helical; Name=1" evidence="1">
    <location>
        <begin position="26"/>
        <end position="46"/>
    </location>
</feature>
<feature type="topological domain" description="Cytoplasmic" evidence="1">
    <location>
        <begin position="47"/>
        <end position="54"/>
    </location>
</feature>
<feature type="transmembrane region" description="Helical; Name=2" evidence="1">
    <location>
        <begin position="55"/>
        <end position="75"/>
    </location>
</feature>
<feature type="topological domain" description="Extracellular" evidence="1">
    <location>
        <begin position="76"/>
        <end position="99"/>
    </location>
</feature>
<feature type="transmembrane region" description="Helical; Name=3" evidence="1">
    <location>
        <begin position="100"/>
        <end position="120"/>
    </location>
</feature>
<feature type="topological domain" description="Cytoplasmic" evidence="1">
    <location>
        <begin position="121"/>
        <end position="139"/>
    </location>
</feature>
<feature type="transmembrane region" description="Helical; Name=4" evidence="1">
    <location>
        <begin position="140"/>
        <end position="160"/>
    </location>
</feature>
<feature type="topological domain" description="Extracellular" evidence="1">
    <location>
        <begin position="161"/>
        <end position="196"/>
    </location>
</feature>
<feature type="transmembrane region" description="Helical; Name=5" evidence="1">
    <location>
        <begin position="197"/>
        <end position="217"/>
    </location>
</feature>
<feature type="topological domain" description="Cytoplasmic" evidence="1">
    <location>
        <begin position="218"/>
        <end position="237"/>
    </location>
</feature>
<feature type="transmembrane region" description="Helical; Name=6" evidence="1">
    <location>
        <begin position="238"/>
        <end position="258"/>
    </location>
</feature>
<feature type="topological domain" description="Extracellular" evidence="1">
    <location>
        <begin position="259"/>
        <end position="271"/>
    </location>
</feature>
<feature type="transmembrane region" description="Helical; Name=7" evidence="1">
    <location>
        <begin position="272"/>
        <end position="292"/>
    </location>
</feature>
<feature type="topological domain" description="Cytoplasmic" evidence="1">
    <location>
        <begin position="293"/>
        <end position="311"/>
    </location>
</feature>
<feature type="glycosylation site" description="N-linked (GlcNAc...) asparagine" evidence="1">
    <location>
        <position position="5"/>
    </location>
</feature>
<feature type="glycosylation site" description="N-linked (GlcNAc...) asparagine" evidence="1">
    <location>
        <position position="195"/>
    </location>
</feature>
<feature type="disulfide bond" evidence="2">
    <location>
        <begin position="97"/>
        <end position="189"/>
    </location>
</feature>
<feature type="sequence variant" id="VAR_062045" description="In dbSNP:rs56711116.">
    <original>V</original>
    <variation>M</variation>
    <location>
        <position position="59"/>
    </location>
</feature>
<feature type="sequence variant" id="VAR_034229" description="In dbSNP:rs17148058.">
    <original>M</original>
    <variation>R</variation>
    <location>
        <position position="81"/>
    </location>
</feature>
<evidence type="ECO:0000255" key="1"/>
<evidence type="ECO:0000255" key="2">
    <source>
        <dbReference type="PROSITE-ProRule" id="PRU00521"/>
    </source>
</evidence>
<evidence type="ECO:0000305" key="3"/>
<keyword id="KW-1003">Cell membrane</keyword>
<keyword id="KW-1015">Disulfide bond</keyword>
<keyword id="KW-0297">G-protein coupled receptor</keyword>
<keyword id="KW-0325">Glycoprotein</keyword>
<keyword id="KW-0472">Membrane</keyword>
<keyword id="KW-0552">Olfaction</keyword>
<keyword id="KW-0675">Receptor</keyword>
<keyword id="KW-1185">Reference proteome</keyword>
<keyword id="KW-0716">Sensory transduction</keyword>
<keyword id="KW-0807">Transducer</keyword>
<keyword id="KW-0812">Transmembrane</keyword>
<keyword id="KW-1133">Transmembrane helix</keyword>
<dbReference type="EMBL" id="AB065782">
    <property type="protein sequence ID" value="BAC06002.1"/>
    <property type="molecule type" value="Genomic_DNA"/>
</dbReference>
<dbReference type="EMBL" id="AF399526">
    <property type="protein sequence ID" value="AAK95011.1"/>
    <property type="molecule type" value="Genomic_DNA"/>
</dbReference>
<dbReference type="EMBL" id="X64990">
    <property type="status" value="NOT_ANNOTATED_CDS"/>
    <property type="molecule type" value="mRNA"/>
</dbReference>
<dbReference type="EMBL" id="BK004396">
    <property type="protein sequence ID" value="DAA04794.1"/>
    <property type="molecule type" value="Genomic_DNA"/>
</dbReference>
<dbReference type="CCDS" id="CCDS31511.1"/>
<dbReference type="RefSeq" id="NP_001004739.1">
    <property type="nucleotide sequence ID" value="NM_001004739.1"/>
</dbReference>
<dbReference type="SMR" id="Q8NGL0"/>
<dbReference type="FunCoup" id="Q8NGL0">
    <property type="interactions" value="416"/>
</dbReference>
<dbReference type="STRING" id="9606.ENSP00000367650"/>
<dbReference type="GlyCosmos" id="Q8NGL0">
    <property type="glycosylation" value="2 sites, No reported glycans"/>
</dbReference>
<dbReference type="GlyGen" id="Q8NGL0">
    <property type="glycosylation" value="2 sites"/>
</dbReference>
<dbReference type="PhosphoSitePlus" id="Q8NGL0"/>
<dbReference type="BioMuta" id="OR5L2"/>
<dbReference type="DMDM" id="38372719"/>
<dbReference type="MassIVE" id="Q8NGL0"/>
<dbReference type="PaxDb" id="9606-ENSP00000367650"/>
<dbReference type="Antibodypedia" id="53546">
    <property type="antibodies" value="72 antibodies from 13 providers"/>
</dbReference>
<dbReference type="DNASU" id="26338"/>
<dbReference type="Ensembl" id="ENST00000378397.1">
    <property type="protein sequence ID" value="ENSP00000367650.1"/>
    <property type="gene ID" value="ENSG00000205030.1"/>
</dbReference>
<dbReference type="GeneID" id="26338"/>
<dbReference type="KEGG" id="hsa:26338"/>
<dbReference type="MANE-Select" id="ENST00000378397.1">
    <property type="protein sequence ID" value="ENSP00000367650.1"/>
    <property type="RefSeq nucleotide sequence ID" value="NM_001004739.1"/>
    <property type="RefSeq protein sequence ID" value="NP_001004739.1"/>
</dbReference>
<dbReference type="UCSC" id="uc001nhy.1">
    <property type="organism name" value="human"/>
</dbReference>
<dbReference type="AGR" id="HGNC:8351"/>
<dbReference type="CTD" id="26338"/>
<dbReference type="GeneCards" id="OR5L2"/>
<dbReference type="HGNC" id="HGNC:8351">
    <property type="gene designation" value="OR5L2"/>
</dbReference>
<dbReference type="HPA" id="ENSG00000205030">
    <property type="expression patterns" value="Not detected"/>
</dbReference>
<dbReference type="neXtProt" id="NX_Q8NGL0"/>
<dbReference type="OpenTargets" id="ENSG00000205030"/>
<dbReference type="PharmGKB" id="PA32545"/>
<dbReference type="VEuPathDB" id="HostDB:ENSG00000205030"/>
<dbReference type="eggNOG" id="ENOG502T9KN">
    <property type="taxonomic scope" value="Eukaryota"/>
</dbReference>
<dbReference type="GeneTree" id="ENSGT01130000278300"/>
<dbReference type="HOGENOM" id="CLU_012526_1_0_1"/>
<dbReference type="InParanoid" id="Q8NGL0"/>
<dbReference type="OMA" id="RVELTSC"/>
<dbReference type="OrthoDB" id="9448403at2759"/>
<dbReference type="PAN-GO" id="Q8NGL0">
    <property type="GO annotations" value="4 GO annotations based on evolutionary models"/>
</dbReference>
<dbReference type="PhylomeDB" id="Q8NGL0"/>
<dbReference type="TreeFam" id="TF352753"/>
<dbReference type="PathwayCommons" id="Q8NGL0"/>
<dbReference type="Reactome" id="R-HSA-9752946">
    <property type="pathway name" value="Expression and translocation of olfactory receptors"/>
</dbReference>
<dbReference type="BioGRID-ORCS" id="26338">
    <property type="hits" value="15 hits in 708 CRISPR screens"/>
</dbReference>
<dbReference type="GeneWiki" id="OR5L2"/>
<dbReference type="GenomeRNAi" id="26338"/>
<dbReference type="Pharos" id="Q8NGL0">
    <property type="development level" value="Tdark"/>
</dbReference>
<dbReference type="PRO" id="PR:Q8NGL0"/>
<dbReference type="Proteomes" id="UP000005640">
    <property type="component" value="Chromosome 11"/>
</dbReference>
<dbReference type="RNAct" id="Q8NGL0">
    <property type="molecule type" value="protein"/>
</dbReference>
<dbReference type="Bgee" id="ENSG00000205030">
    <property type="expression patterns" value="Expressed in amniotic fluid"/>
</dbReference>
<dbReference type="GO" id="GO:0005886">
    <property type="term" value="C:plasma membrane"/>
    <property type="evidence" value="ECO:0007669"/>
    <property type="project" value="UniProtKB-SubCell"/>
</dbReference>
<dbReference type="GO" id="GO:0004930">
    <property type="term" value="F:G protein-coupled receptor activity"/>
    <property type="evidence" value="ECO:0007669"/>
    <property type="project" value="UniProtKB-KW"/>
</dbReference>
<dbReference type="GO" id="GO:0005549">
    <property type="term" value="F:odorant binding"/>
    <property type="evidence" value="ECO:0000318"/>
    <property type="project" value="GO_Central"/>
</dbReference>
<dbReference type="GO" id="GO:0004984">
    <property type="term" value="F:olfactory receptor activity"/>
    <property type="evidence" value="ECO:0000318"/>
    <property type="project" value="GO_Central"/>
</dbReference>
<dbReference type="GO" id="GO:0007186">
    <property type="term" value="P:G protein-coupled receptor signaling pathway"/>
    <property type="evidence" value="ECO:0000318"/>
    <property type="project" value="GO_Central"/>
</dbReference>
<dbReference type="GO" id="GO:0007608">
    <property type="term" value="P:sensory perception of smell"/>
    <property type="evidence" value="ECO:0000318"/>
    <property type="project" value="GO_Central"/>
</dbReference>
<dbReference type="CDD" id="cd15410">
    <property type="entry name" value="7tmA_OR5D-like"/>
    <property type="match status" value="1"/>
</dbReference>
<dbReference type="FunFam" id="1.20.1070.10:FF:000003">
    <property type="entry name" value="Olfactory receptor"/>
    <property type="match status" value="1"/>
</dbReference>
<dbReference type="Gene3D" id="1.20.1070.10">
    <property type="entry name" value="Rhodopsin 7-helix transmembrane proteins"/>
    <property type="match status" value="1"/>
</dbReference>
<dbReference type="InterPro" id="IPR000276">
    <property type="entry name" value="GPCR_Rhodpsn"/>
</dbReference>
<dbReference type="InterPro" id="IPR017452">
    <property type="entry name" value="GPCR_Rhodpsn_7TM"/>
</dbReference>
<dbReference type="InterPro" id="IPR000725">
    <property type="entry name" value="Olfact_rcpt"/>
</dbReference>
<dbReference type="PANTHER" id="PTHR48018">
    <property type="entry name" value="OLFACTORY RECEPTOR"/>
    <property type="match status" value="1"/>
</dbReference>
<dbReference type="Pfam" id="PF13853">
    <property type="entry name" value="7tm_4"/>
    <property type="match status" value="1"/>
</dbReference>
<dbReference type="PRINTS" id="PR00237">
    <property type="entry name" value="GPCRRHODOPSN"/>
</dbReference>
<dbReference type="PRINTS" id="PR00245">
    <property type="entry name" value="OLFACTORYR"/>
</dbReference>
<dbReference type="SUPFAM" id="SSF81321">
    <property type="entry name" value="Family A G protein-coupled receptor-like"/>
    <property type="match status" value="1"/>
</dbReference>
<dbReference type="PROSITE" id="PS00237">
    <property type="entry name" value="G_PROTEIN_RECEP_F1_1"/>
    <property type="match status" value="1"/>
</dbReference>
<dbReference type="PROSITE" id="PS50262">
    <property type="entry name" value="G_PROTEIN_RECEP_F1_2"/>
    <property type="match status" value="1"/>
</dbReference>
<proteinExistence type="evidence at transcript level"/>
<comment type="function">
    <text evidence="3">Odorant receptor.</text>
</comment>
<comment type="subcellular location">
    <subcellularLocation>
        <location>Cell membrane</location>
        <topology>Multi-pass membrane protein</topology>
    </subcellularLocation>
</comment>
<comment type="similarity">
    <text evidence="2">Belongs to the G-protein coupled receptor 1 family.</text>
</comment>
<comment type="online information" name="Human Olfactory Receptor Data Exploratorium (HORDE)">
    <link uri="http://genome.weizmann.ac.il/horde/card/index/symbol:OR5L2"/>
</comment>
<sequence length="311" mass="34682">MGKENCTTVAEFILLGLSDVPELRVCLFLLFLLIYGVTLLANLGMTALIQVSSRLHTPVYFFLSHLSFVDFCYSSIIVPKMLANIFNKDKAISFLGCMVQFYLFCTCGVTEVFLLAVMAYDRFVAICNPLLYMVTMSQKLRVELTSCCYFCGTVCSLIHSSLALRILFYRSNVINHFFCDLPPLLSLACSDVTVNETLLFLVATLNESVTIMIILTSYLLILTTILKIHSAESRHKAFSTCASHLTAITVSHGTILYIYCRPSSGNSGDVDKVATVFYTVVIPMLNPLIYSLRNKDVNKALRKVMGSKIHS</sequence>
<gene>
    <name type="primary">OR5L2</name>
</gene>
<accession>Q8NGL0</accession>
<accession>Q6IF66</accession>
<accession>Q96RB2</accession>
<reference key="1">
    <citation type="submission" date="2001-07" db="EMBL/GenBank/DDBJ databases">
        <title>Genome-wide discovery and analysis of human seven transmembrane helix receptor genes.</title>
        <authorList>
            <person name="Suwa M."/>
            <person name="Sato T."/>
            <person name="Okouchi I."/>
            <person name="Arita M."/>
            <person name="Futami K."/>
            <person name="Matsumoto S."/>
            <person name="Tsutsumi S."/>
            <person name="Aburatani H."/>
            <person name="Asai K."/>
            <person name="Akiyama Y."/>
        </authorList>
    </citation>
    <scope>NUCLEOTIDE SEQUENCE [GENOMIC DNA]</scope>
</reference>
<reference key="2">
    <citation type="journal article" date="2002" name="Genomics">
        <title>DEFOG: a practical scheme for deciphering families of genes.</title>
        <authorList>
            <person name="Fuchs T."/>
            <person name="Malecova B."/>
            <person name="Linhart C."/>
            <person name="Sharan R."/>
            <person name="Khen M."/>
            <person name="Herwig R."/>
            <person name="Shmulevich D."/>
            <person name="Elkon R."/>
            <person name="Steinfath M."/>
            <person name="O'Brien J.K."/>
            <person name="Radelof U."/>
            <person name="Lehrach H."/>
            <person name="Lancet D."/>
            <person name="Shamir R."/>
        </authorList>
    </citation>
    <scope>NUCLEOTIDE SEQUENCE [GENOMIC DNA] OF 68-283</scope>
</reference>
<reference key="3">
    <citation type="journal article" date="1992" name="Nature">
        <title>Expression of members of the putative olfactory receptor gene family in mammalian germ cells.</title>
        <authorList>
            <person name="Parmentier M."/>
            <person name="Libert F."/>
            <person name="Schurmans S."/>
            <person name="Schiffmann S."/>
            <person name="Lefort A."/>
            <person name="Eggerickx D."/>
            <person name="Ledent C."/>
            <person name="Mollereau C."/>
            <person name="Gerard C."/>
            <person name="Perret J."/>
            <person name="Grootegoed A."/>
            <person name="Vassart G."/>
        </authorList>
    </citation>
    <scope>NUCLEOTIDE SEQUENCE [MRNA] OF 126-237</scope>
    <source>
        <tissue>Testis</tissue>
    </source>
</reference>
<reference key="4">
    <citation type="journal article" date="2004" name="Proc. Natl. Acad. Sci. U.S.A.">
        <title>The human olfactory receptor gene family.</title>
        <authorList>
            <person name="Malnic B."/>
            <person name="Godfrey P.A."/>
            <person name="Buck L.B."/>
        </authorList>
    </citation>
    <scope>IDENTIFICATION</scope>
</reference>
<reference key="5">
    <citation type="journal article" date="2004" name="Proc. Natl. Acad. Sci. U.S.A.">
        <authorList>
            <person name="Malnic B."/>
            <person name="Godfrey P.A."/>
            <person name="Buck L.B."/>
        </authorList>
    </citation>
    <scope>ERRATUM OF PUBMED:14983052</scope>
</reference>
<protein>
    <recommendedName>
        <fullName>Olfactory receptor 5L2</fullName>
    </recommendedName>
    <alternativeName>
        <fullName>HTPCRX16</fullName>
    </alternativeName>
    <alternativeName>
        <fullName>Olfactory receptor OR11-153</fullName>
    </alternativeName>
</protein>
<organism>
    <name type="scientific">Homo sapiens</name>
    <name type="common">Human</name>
    <dbReference type="NCBI Taxonomy" id="9606"/>
    <lineage>
        <taxon>Eukaryota</taxon>
        <taxon>Metazoa</taxon>
        <taxon>Chordata</taxon>
        <taxon>Craniata</taxon>
        <taxon>Vertebrata</taxon>
        <taxon>Euteleostomi</taxon>
        <taxon>Mammalia</taxon>
        <taxon>Eutheria</taxon>
        <taxon>Euarchontoglires</taxon>
        <taxon>Primates</taxon>
        <taxon>Haplorrhini</taxon>
        <taxon>Catarrhini</taxon>
        <taxon>Hominidae</taxon>
        <taxon>Homo</taxon>
    </lineage>
</organism>